<proteinExistence type="inferred from homology"/>
<sequence length="98" mass="11097">MALTKAEMAEHLFETLGINKRVAKEMVETFFEEIRSALESGEQVKLSGFGNFDLRDKNQRPGRNPKTGEDIPISARRVVTFRPGQKLKSRVESSNSEK</sequence>
<keyword id="KW-0233">DNA recombination</keyword>
<keyword id="KW-0238">DNA-binding</keyword>
<keyword id="KW-1185">Reference proteome</keyword>
<keyword id="KW-0804">Transcription</keyword>
<keyword id="KW-0805">Transcription regulation</keyword>
<keyword id="KW-0810">Translation regulation</keyword>
<organism>
    <name type="scientific">Shewanella amazonensis (strain ATCC BAA-1098 / SB2B)</name>
    <dbReference type="NCBI Taxonomy" id="326297"/>
    <lineage>
        <taxon>Bacteria</taxon>
        <taxon>Pseudomonadati</taxon>
        <taxon>Pseudomonadota</taxon>
        <taxon>Gammaproteobacteria</taxon>
        <taxon>Alteromonadales</taxon>
        <taxon>Shewanellaceae</taxon>
        <taxon>Shewanella</taxon>
    </lineage>
</organism>
<evidence type="ECO:0000255" key="1">
    <source>
        <dbReference type="HAMAP-Rule" id="MF_00380"/>
    </source>
</evidence>
<evidence type="ECO:0000256" key="2">
    <source>
        <dbReference type="SAM" id="MobiDB-lite"/>
    </source>
</evidence>
<dbReference type="EMBL" id="CP000507">
    <property type="protein sequence ID" value="ABM00157.1"/>
    <property type="molecule type" value="Genomic_DNA"/>
</dbReference>
<dbReference type="RefSeq" id="WP_011760064.1">
    <property type="nucleotide sequence ID" value="NC_008700.1"/>
</dbReference>
<dbReference type="SMR" id="A1S700"/>
<dbReference type="STRING" id="326297.Sama_1951"/>
<dbReference type="KEGG" id="saz:Sama_1951"/>
<dbReference type="eggNOG" id="COG0776">
    <property type="taxonomic scope" value="Bacteria"/>
</dbReference>
<dbReference type="HOGENOM" id="CLU_105066_1_3_6"/>
<dbReference type="OrthoDB" id="9797747at2"/>
<dbReference type="Proteomes" id="UP000009175">
    <property type="component" value="Chromosome"/>
</dbReference>
<dbReference type="GO" id="GO:0005829">
    <property type="term" value="C:cytosol"/>
    <property type="evidence" value="ECO:0007669"/>
    <property type="project" value="TreeGrafter"/>
</dbReference>
<dbReference type="GO" id="GO:0003677">
    <property type="term" value="F:DNA binding"/>
    <property type="evidence" value="ECO:0007669"/>
    <property type="project" value="UniProtKB-UniRule"/>
</dbReference>
<dbReference type="GO" id="GO:0030527">
    <property type="term" value="F:structural constituent of chromatin"/>
    <property type="evidence" value="ECO:0007669"/>
    <property type="project" value="InterPro"/>
</dbReference>
<dbReference type="GO" id="GO:0006310">
    <property type="term" value="P:DNA recombination"/>
    <property type="evidence" value="ECO:0007669"/>
    <property type="project" value="UniProtKB-UniRule"/>
</dbReference>
<dbReference type="GO" id="GO:0009893">
    <property type="term" value="P:positive regulation of metabolic process"/>
    <property type="evidence" value="ECO:0007669"/>
    <property type="project" value="UniProtKB-ARBA"/>
</dbReference>
<dbReference type="GO" id="GO:0006355">
    <property type="term" value="P:regulation of DNA-templated transcription"/>
    <property type="evidence" value="ECO:0007669"/>
    <property type="project" value="UniProtKB-UniRule"/>
</dbReference>
<dbReference type="GO" id="GO:0006417">
    <property type="term" value="P:regulation of translation"/>
    <property type="evidence" value="ECO:0007669"/>
    <property type="project" value="UniProtKB-UniRule"/>
</dbReference>
<dbReference type="CDD" id="cd13835">
    <property type="entry name" value="IHF_A"/>
    <property type="match status" value="1"/>
</dbReference>
<dbReference type="FunFam" id="4.10.520.10:FF:000002">
    <property type="entry name" value="Integration host factor subunit alpha"/>
    <property type="match status" value="1"/>
</dbReference>
<dbReference type="Gene3D" id="4.10.520.10">
    <property type="entry name" value="IHF-like DNA-binding proteins"/>
    <property type="match status" value="1"/>
</dbReference>
<dbReference type="HAMAP" id="MF_00380">
    <property type="entry name" value="IHF_alpha"/>
    <property type="match status" value="1"/>
</dbReference>
<dbReference type="InterPro" id="IPR000119">
    <property type="entry name" value="Hist_DNA-bd"/>
</dbReference>
<dbReference type="InterPro" id="IPR020816">
    <property type="entry name" value="Histone-like_DNA-bd_CS"/>
</dbReference>
<dbReference type="InterPro" id="IPR010992">
    <property type="entry name" value="IHF-like_DNA-bd_dom_sf"/>
</dbReference>
<dbReference type="InterPro" id="IPR005684">
    <property type="entry name" value="IHF_alpha"/>
</dbReference>
<dbReference type="NCBIfam" id="TIGR00987">
    <property type="entry name" value="himA"/>
    <property type="match status" value="1"/>
</dbReference>
<dbReference type="NCBIfam" id="NF001401">
    <property type="entry name" value="PRK00285.1"/>
    <property type="match status" value="1"/>
</dbReference>
<dbReference type="PANTHER" id="PTHR33175">
    <property type="entry name" value="DNA-BINDING PROTEIN HU"/>
    <property type="match status" value="1"/>
</dbReference>
<dbReference type="PANTHER" id="PTHR33175:SF2">
    <property type="entry name" value="INTEGRATION HOST FACTOR SUBUNIT ALPHA"/>
    <property type="match status" value="1"/>
</dbReference>
<dbReference type="Pfam" id="PF00216">
    <property type="entry name" value="Bac_DNA_binding"/>
    <property type="match status" value="1"/>
</dbReference>
<dbReference type="PRINTS" id="PR01727">
    <property type="entry name" value="DNABINDINGHU"/>
</dbReference>
<dbReference type="SMART" id="SM00411">
    <property type="entry name" value="BHL"/>
    <property type="match status" value="1"/>
</dbReference>
<dbReference type="SUPFAM" id="SSF47729">
    <property type="entry name" value="IHF-like DNA-binding proteins"/>
    <property type="match status" value="1"/>
</dbReference>
<dbReference type="PROSITE" id="PS00045">
    <property type="entry name" value="HISTONE_LIKE"/>
    <property type="match status" value="1"/>
</dbReference>
<comment type="function">
    <text evidence="1">This protein is one of the two subunits of integration host factor, a specific DNA-binding protein that functions in genetic recombination as well as in transcriptional and translational control.</text>
</comment>
<comment type="subunit">
    <text evidence="1">Heterodimer of an alpha and a beta chain.</text>
</comment>
<comment type="similarity">
    <text evidence="1">Belongs to the bacterial histone-like protein family.</text>
</comment>
<protein>
    <recommendedName>
        <fullName evidence="1">Integration host factor subunit alpha</fullName>
        <shortName evidence="1">IHF-alpha</shortName>
    </recommendedName>
</protein>
<reference key="1">
    <citation type="submission" date="2006-12" db="EMBL/GenBank/DDBJ databases">
        <title>Complete sequence of Shewanella amazonensis SB2B.</title>
        <authorList>
            <consortium name="US DOE Joint Genome Institute"/>
            <person name="Copeland A."/>
            <person name="Lucas S."/>
            <person name="Lapidus A."/>
            <person name="Barry K."/>
            <person name="Detter J.C."/>
            <person name="Glavina del Rio T."/>
            <person name="Hammon N."/>
            <person name="Israni S."/>
            <person name="Dalin E."/>
            <person name="Tice H."/>
            <person name="Pitluck S."/>
            <person name="Munk A.C."/>
            <person name="Brettin T."/>
            <person name="Bruce D."/>
            <person name="Han C."/>
            <person name="Tapia R."/>
            <person name="Gilna P."/>
            <person name="Schmutz J."/>
            <person name="Larimer F."/>
            <person name="Land M."/>
            <person name="Hauser L."/>
            <person name="Kyrpides N."/>
            <person name="Mikhailova N."/>
            <person name="Fredrickson J."/>
            <person name="Richardson P."/>
        </authorList>
    </citation>
    <scope>NUCLEOTIDE SEQUENCE [LARGE SCALE GENOMIC DNA]</scope>
    <source>
        <strain>ATCC BAA-1098 / SB2B</strain>
    </source>
</reference>
<accession>A1S700</accession>
<feature type="chain" id="PRO_1000060567" description="Integration host factor subunit alpha">
    <location>
        <begin position="1"/>
        <end position="98"/>
    </location>
</feature>
<feature type="region of interest" description="Disordered" evidence="2">
    <location>
        <begin position="49"/>
        <end position="71"/>
    </location>
</feature>
<gene>
    <name evidence="1" type="primary">ihfA</name>
    <name evidence="1" type="synonym">himA</name>
    <name type="ordered locus">Sama_1951</name>
</gene>
<name>IHFA_SHEAM</name>